<dbReference type="EMBL" id="X70049">
    <property type="protein sequence ID" value="CAA49649.1"/>
    <property type="molecule type" value="Genomic_DNA"/>
</dbReference>
<dbReference type="PIR" id="S32862">
    <property type="entry name" value="S32862"/>
</dbReference>
<dbReference type="SMR" id="P31587"/>
<dbReference type="GO" id="GO:0005886">
    <property type="term" value="C:plasma membrane"/>
    <property type="evidence" value="ECO:0007669"/>
    <property type="project" value="UniProtKB-SubCell"/>
</dbReference>
<dbReference type="GO" id="GO:0015627">
    <property type="term" value="C:type II protein secretion system complex"/>
    <property type="evidence" value="ECO:0007669"/>
    <property type="project" value="InterPro"/>
</dbReference>
<dbReference type="GO" id="GO:0015628">
    <property type="term" value="P:protein secretion by the type II secretion system"/>
    <property type="evidence" value="ECO:0007669"/>
    <property type="project" value="InterPro"/>
</dbReference>
<dbReference type="Gene3D" id="3.55.40.10">
    <property type="entry name" value="minor pseudopilin epsh domain"/>
    <property type="match status" value="1"/>
</dbReference>
<dbReference type="InterPro" id="IPR012902">
    <property type="entry name" value="N_methyl_site"/>
</dbReference>
<dbReference type="InterPro" id="IPR045584">
    <property type="entry name" value="Pilin-like"/>
</dbReference>
<dbReference type="InterPro" id="IPR002416">
    <property type="entry name" value="T2SS_protein-GspH"/>
</dbReference>
<dbReference type="InterPro" id="IPR049875">
    <property type="entry name" value="TypeII_GspH"/>
</dbReference>
<dbReference type="NCBIfam" id="TIGR02532">
    <property type="entry name" value="IV_pilin_GFxxxE"/>
    <property type="match status" value="1"/>
</dbReference>
<dbReference type="NCBIfam" id="TIGR01708">
    <property type="entry name" value="typeII_sec_gspH"/>
    <property type="match status" value="1"/>
</dbReference>
<dbReference type="Pfam" id="PF07963">
    <property type="entry name" value="N_methyl"/>
    <property type="match status" value="1"/>
</dbReference>
<dbReference type="PRINTS" id="PR00885">
    <property type="entry name" value="BCTERIALGSPH"/>
</dbReference>
<dbReference type="SUPFAM" id="SSF54523">
    <property type="entry name" value="Pili subunits"/>
    <property type="match status" value="1"/>
</dbReference>
<dbReference type="PROSITE" id="PS00409">
    <property type="entry name" value="PROKAR_NTER_METHYL"/>
    <property type="match status" value="1"/>
</dbReference>
<protein>
    <recommendedName>
        <fullName>Type II secretion system protein H</fullName>
        <shortName>T2SS minor pseudopilin H</shortName>
    </recommendedName>
    <alternativeName>
        <fullName>General secretion pathway protein H</fullName>
    </alternativeName>
    <alternativeName>
        <fullName>Pectic enzymes secretion protein OutH</fullName>
    </alternativeName>
</protein>
<gene>
    <name type="primary">outH</name>
</gene>
<keyword id="KW-0997">Cell inner membrane</keyword>
<keyword id="KW-1003">Cell membrane</keyword>
<keyword id="KW-0472">Membrane</keyword>
<keyword id="KW-0488">Methylation</keyword>
<keyword id="KW-0653">Protein transport</keyword>
<keyword id="KW-0812">Transmembrane</keyword>
<keyword id="KW-1133">Transmembrane helix</keyword>
<keyword id="KW-0813">Transport</keyword>
<reference key="1">
    <citation type="journal article" date="1993" name="Mol. Microbiol.">
        <title>Molecular cloning and characterization of 13 out genes from Erwinia carotovora subspecies carotovora: genes encoding members of a general secretion pathway (GSP) widespread in Gram-negative bacteria.</title>
        <authorList>
            <person name="Reeves P.J."/>
            <person name="Whitcombe D."/>
            <person name="Wharam S."/>
            <person name="Gibson M."/>
            <person name="Allison G."/>
            <person name="Bunce N."/>
            <person name="Barallon R."/>
            <person name="Douglas P."/>
            <person name="Mulholland V."/>
            <person name="Stevens S."/>
            <person name="Walker S."/>
            <person name="Salmond G.P.C."/>
        </authorList>
    </citation>
    <scope>NUCLEOTIDE SEQUENCE [GENOMIC DNA]</scope>
    <source>
        <strain>SCRI 193</strain>
    </source>
</reference>
<proteinExistence type="inferred from homology"/>
<sequence>MKRSTRKQQGFTLLEMMLVVLLAGIAAGMVVMAFPPERQNDSAWQLARFQAQLEFAAESSQVNEYMLGVRIYPDRWQFYQLQRPAASERIPIPSGDRWQGYKWQPWQPHRVSASATLPEALRLELLQADGKKVDKTQSGDDPDILILPGGEITPFRLLVKSENKALSNWLQVDNTGRFVTSMSQGKKR</sequence>
<evidence type="ECO:0000250" key="1">
    <source>
        <dbReference type="UniProtKB" id="Q00515"/>
    </source>
</evidence>
<evidence type="ECO:0000255" key="2"/>
<evidence type="ECO:0000255" key="3">
    <source>
        <dbReference type="PROSITE-ProRule" id="PRU01070"/>
    </source>
</evidence>
<evidence type="ECO:0000305" key="4"/>
<accession>P31587</accession>
<comment type="function">
    <text evidence="1">Component of the type II secretion system required for the energy-dependent secretion of extracellular factors such as proteases and toxins from the periplasm. Part of the pseudopilus tip complex that is critical for the recognition and binding of secretion substrates.</text>
</comment>
<comment type="subunit">
    <text evidence="1">Type II secretion is composed of four main components: the outer membrane complex, the inner membrane complex, the cytoplasmic secretion ATPase and the periplasm-spanning pseudopilus. Interacts with core component OutG.</text>
</comment>
<comment type="subcellular location">
    <subcellularLocation>
        <location evidence="1">Cell inner membrane</location>
        <topology evidence="2">Single-pass membrane protein</topology>
    </subcellularLocation>
</comment>
<comment type="PTM">
    <text evidence="1">Cleaved by prepilin peptidase.</text>
</comment>
<comment type="PTM">
    <text evidence="1">Methylated by prepilin peptidase at the amino group of the N-terminal phenylalanine once the leader sequence is cleaved by prepilin peptidase.</text>
</comment>
<comment type="similarity">
    <text evidence="4">Belongs to the GSP H family.</text>
</comment>
<name>GSPH_PECCC</name>
<feature type="propeptide" id="PRO_0000024218" description="Leader sequence" evidence="3">
    <location>
        <begin position="1"/>
        <end position="10"/>
    </location>
</feature>
<feature type="chain" id="PRO_0000024219" description="Type II secretion system protein H">
    <location>
        <begin position="11"/>
        <end position="188"/>
    </location>
</feature>
<feature type="transmembrane region" description="Helical" evidence="2">
    <location>
        <begin position="13"/>
        <end position="35"/>
    </location>
</feature>
<feature type="modified residue" description="N-methylphenylalanine" evidence="3">
    <location>
        <position position="11"/>
    </location>
</feature>
<organism>
    <name type="scientific">Pectobacterium carotovorum subsp. carotovorum</name>
    <name type="common">Erwinia carotovora subsp. carotovora</name>
    <dbReference type="NCBI Taxonomy" id="555"/>
    <lineage>
        <taxon>Bacteria</taxon>
        <taxon>Pseudomonadati</taxon>
        <taxon>Pseudomonadota</taxon>
        <taxon>Gammaproteobacteria</taxon>
        <taxon>Enterobacterales</taxon>
        <taxon>Pectobacteriaceae</taxon>
        <taxon>Pectobacterium</taxon>
    </lineage>
</organism>